<dbReference type="EC" id="2.7.1.33" evidence="1"/>
<dbReference type="EMBL" id="AE016877">
    <property type="protein sequence ID" value="AAP09847.1"/>
    <property type="molecule type" value="Genomic_DNA"/>
</dbReference>
<dbReference type="RefSeq" id="NP_832646.1">
    <property type="nucleotide sequence ID" value="NC_004722.1"/>
</dbReference>
<dbReference type="RefSeq" id="WP_000442504.1">
    <property type="nucleotide sequence ID" value="NZ_CP138336.1"/>
</dbReference>
<dbReference type="SMR" id="Q81C81"/>
<dbReference type="STRING" id="226900.BC_2898"/>
<dbReference type="KEGG" id="bce:BC2898"/>
<dbReference type="PATRIC" id="fig|226900.8.peg.2965"/>
<dbReference type="HOGENOM" id="CLU_087521_1_0_9"/>
<dbReference type="OrthoDB" id="358216at2"/>
<dbReference type="UniPathway" id="UPA00241">
    <property type="reaction ID" value="UER00352"/>
</dbReference>
<dbReference type="Proteomes" id="UP000001417">
    <property type="component" value="Chromosome"/>
</dbReference>
<dbReference type="GO" id="GO:0005829">
    <property type="term" value="C:cytosol"/>
    <property type="evidence" value="ECO:0000318"/>
    <property type="project" value="GO_Central"/>
</dbReference>
<dbReference type="GO" id="GO:0005524">
    <property type="term" value="F:ATP binding"/>
    <property type="evidence" value="ECO:0007669"/>
    <property type="project" value="UniProtKB-UniRule"/>
</dbReference>
<dbReference type="GO" id="GO:0004594">
    <property type="term" value="F:pantothenate kinase activity"/>
    <property type="evidence" value="ECO:0000318"/>
    <property type="project" value="GO_Central"/>
</dbReference>
<dbReference type="GO" id="GO:0015937">
    <property type="term" value="P:coenzyme A biosynthetic process"/>
    <property type="evidence" value="ECO:0000318"/>
    <property type="project" value="GO_Central"/>
</dbReference>
<dbReference type="CDD" id="cd24085">
    <property type="entry name" value="ASKHA_NBD_PanK-II_bac"/>
    <property type="match status" value="1"/>
</dbReference>
<dbReference type="Gene3D" id="3.30.420.40">
    <property type="match status" value="1"/>
</dbReference>
<dbReference type="HAMAP" id="MF_01273">
    <property type="entry name" value="Pantothen_kinase_2"/>
    <property type="match status" value="1"/>
</dbReference>
<dbReference type="InterPro" id="IPR043129">
    <property type="entry name" value="ATPase_NBD"/>
</dbReference>
<dbReference type="InterPro" id="IPR004567">
    <property type="entry name" value="Type_II_PanK"/>
</dbReference>
<dbReference type="InterPro" id="IPR011602">
    <property type="entry name" value="Type_II_PanK_bac"/>
</dbReference>
<dbReference type="NCBIfam" id="TIGR00555">
    <property type="entry name" value="panK_eukar"/>
    <property type="match status" value="1"/>
</dbReference>
<dbReference type="NCBIfam" id="NF009842">
    <property type="entry name" value="PRK13317.1"/>
    <property type="match status" value="1"/>
</dbReference>
<dbReference type="PANTHER" id="PTHR12280:SF20">
    <property type="entry name" value="4'-PHOSPHOPANTETHEINE PHOSPHATASE"/>
    <property type="match status" value="1"/>
</dbReference>
<dbReference type="PANTHER" id="PTHR12280">
    <property type="entry name" value="PANTOTHENATE KINASE"/>
    <property type="match status" value="1"/>
</dbReference>
<dbReference type="Pfam" id="PF03630">
    <property type="entry name" value="Fumble"/>
    <property type="match status" value="1"/>
</dbReference>
<dbReference type="PIRSF" id="PIRSF036940">
    <property type="entry name" value="PanK_bac_aCoA"/>
    <property type="match status" value="1"/>
</dbReference>
<dbReference type="SUPFAM" id="SSF53067">
    <property type="entry name" value="Actin-like ATPase domain"/>
    <property type="match status" value="1"/>
</dbReference>
<protein>
    <recommendedName>
        <fullName evidence="1">Type II pantothenate kinase</fullName>
        <ecNumber evidence="1">2.7.1.33</ecNumber>
    </recommendedName>
    <alternativeName>
        <fullName evidence="1">PanK-II</fullName>
    </alternativeName>
    <alternativeName>
        <fullName evidence="1">Pantothenic acid kinase</fullName>
    </alternativeName>
</protein>
<name>COAW_BACCR</name>
<organism>
    <name type="scientific">Bacillus cereus (strain ATCC 14579 / DSM 31 / CCUG 7414 / JCM 2152 / NBRC 15305 / NCIMB 9373 / NCTC 2599 / NRRL B-3711)</name>
    <dbReference type="NCBI Taxonomy" id="226900"/>
    <lineage>
        <taxon>Bacteria</taxon>
        <taxon>Bacillati</taxon>
        <taxon>Bacillota</taxon>
        <taxon>Bacilli</taxon>
        <taxon>Bacillales</taxon>
        <taxon>Bacillaceae</taxon>
        <taxon>Bacillus</taxon>
        <taxon>Bacillus cereus group</taxon>
    </lineage>
</organism>
<proteinExistence type="inferred from homology"/>
<gene>
    <name evidence="1" type="primary">coaW</name>
    <name type="ordered locus">BC_2898</name>
</gene>
<reference key="1">
    <citation type="journal article" date="2003" name="Nature">
        <title>Genome sequence of Bacillus cereus and comparative analysis with Bacillus anthracis.</title>
        <authorList>
            <person name="Ivanova N."/>
            <person name="Sorokin A."/>
            <person name="Anderson I."/>
            <person name="Galleron N."/>
            <person name="Candelon B."/>
            <person name="Kapatral V."/>
            <person name="Bhattacharyya A."/>
            <person name="Reznik G."/>
            <person name="Mikhailova N."/>
            <person name="Lapidus A."/>
            <person name="Chu L."/>
            <person name="Mazur M."/>
            <person name="Goltsman E."/>
            <person name="Larsen N."/>
            <person name="D'Souza M."/>
            <person name="Walunas T."/>
            <person name="Grechkin Y."/>
            <person name="Pusch G."/>
            <person name="Haselkorn R."/>
            <person name="Fonstein M."/>
            <person name="Ehrlich S.D."/>
            <person name="Overbeek R."/>
            <person name="Kyrpides N.C."/>
        </authorList>
    </citation>
    <scope>NUCLEOTIDE SEQUENCE [LARGE SCALE GENOMIC DNA]</scope>
    <source>
        <strain>ATCC 14579 / DSM 31 / CCUG 7414 / JCM 2152 / NBRC 15305 / NCIMB 9373 / NCTC 2599 / NRRL B-3711</strain>
    </source>
</reference>
<comment type="function">
    <text evidence="1">Catalyzes the phosphorylation of pantothenate (Pan), the first step in CoA biosynthesis.</text>
</comment>
<comment type="catalytic activity">
    <reaction evidence="1">
        <text>(R)-pantothenate + ATP = (R)-4'-phosphopantothenate + ADP + H(+)</text>
        <dbReference type="Rhea" id="RHEA:16373"/>
        <dbReference type="ChEBI" id="CHEBI:10986"/>
        <dbReference type="ChEBI" id="CHEBI:15378"/>
        <dbReference type="ChEBI" id="CHEBI:29032"/>
        <dbReference type="ChEBI" id="CHEBI:30616"/>
        <dbReference type="ChEBI" id="CHEBI:456216"/>
        <dbReference type="EC" id="2.7.1.33"/>
    </reaction>
</comment>
<comment type="pathway">
    <text evidence="1">Cofactor biosynthesis; coenzyme A biosynthesis; CoA from (R)-pantothenate: step 1/5.</text>
</comment>
<comment type="subunit">
    <text evidence="1">Homodimer.</text>
</comment>
<comment type="subcellular location">
    <subcellularLocation>
        <location evidence="1">Cytoplasm</location>
    </subcellularLocation>
</comment>
<comment type="similarity">
    <text evidence="1">Belongs to the type II pantothenate kinase family.</text>
</comment>
<accession>Q81C81</accession>
<feature type="chain" id="PRO_0000261339" description="Type II pantothenate kinase">
    <location>
        <begin position="1"/>
        <end position="273"/>
    </location>
</feature>
<feature type="active site" description="Proton acceptor" evidence="1">
    <location>
        <position position="76"/>
    </location>
</feature>
<feature type="binding site" evidence="1">
    <location>
        <begin position="8"/>
        <end position="15"/>
    </location>
    <ligand>
        <name>ATP</name>
        <dbReference type="ChEBI" id="CHEBI:30616"/>
    </ligand>
</feature>
<feature type="binding site" evidence="1">
    <location>
        <position position="105"/>
    </location>
    <ligand>
        <name>ATP</name>
        <dbReference type="ChEBI" id="CHEBI:30616"/>
    </ligand>
</feature>
<feature type="binding site" evidence="1">
    <location>
        <begin position="127"/>
        <end position="131"/>
    </location>
    <ligand>
        <name>ATP</name>
        <dbReference type="ChEBI" id="CHEBI:30616"/>
    </ligand>
</feature>
<feature type="binding site" evidence="1">
    <location>
        <position position="143"/>
    </location>
    <ligand>
        <name>ATP</name>
        <dbReference type="ChEBI" id="CHEBI:30616"/>
    </ligand>
</feature>
<feature type="binding site" evidence="1">
    <location>
        <position position="230"/>
    </location>
    <ligand>
        <name>ATP</name>
        <dbReference type="ChEBI" id="CHEBI:30616"/>
    </ligand>
</feature>
<sequence>MERTIGIDAGGTLTKIAYFNKKKLLTFEKFYSHEQHKIIDWIKNNNGIKQICITGGKSKLLQQLLTGSYKIIELSEFEATLAGVQFILKEEQHTINNFILTNIGTGTSIHYVYNEQYIRAGGTGVGGGTIMGLSKLLTNIDHFEDVIPLTKVGSRKELDITVGDIYGGILSPIDNNLTASNFGKAAITESNNSSSDILATVQGLVGEVVTALSLQFAETKNIEHIIYIGSTLCNNVQLQHIISSYTEYQNKTPIFLQDGGNSGAIGALLHATK</sequence>
<keyword id="KW-0067">ATP-binding</keyword>
<keyword id="KW-0173">Coenzyme A biosynthesis</keyword>
<keyword id="KW-0963">Cytoplasm</keyword>
<keyword id="KW-0418">Kinase</keyword>
<keyword id="KW-0547">Nucleotide-binding</keyword>
<keyword id="KW-1185">Reference proteome</keyword>
<keyword id="KW-0808">Transferase</keyword>
<evidence type="ECO:0000255" key="1">
    <source>
        <dbReference type="HAMAP-Rule" id="MF_01273"/>
    </source>
</evidence>